<dbReference type="EMBL" id="AK037027">
    <property type="protein sequence ID" value="BAC29675.1"/>
    <property type="molecule type" value="mRNA"/>
</dbReference>
<dbReference type="EMBL" id="AK084988">
    <property type="protein sequence ID" value="BAC39331.1"/>
    <property type="molecule type" value="mRNA"/>
</dbReference>
<dbReference type="EMBL" id="AK122316">
    <property type="protein sequence ID" value="BAC65598.1"/>
    <property type="molecule type" value="mRNA"/>
</dbReference>
<dbReference type="EMBL" id="BC018234">
    <property type="protein sequence ID" value="AAH18234.1"/>
    <property type="molecule type" value="mRNA"/>
</dbReference>
<dbReference type="CCDS" id="CCDS51506.1">
    <molecule id="Q8BZ05-1"/>
</dbReference>
<dbReference type="SMR" id="Q8BZ05"/>
<dbReference type="FunCoup" id="Q8BZ05">
    <property type="interactions" value="477"/>
</dbReference>
<dbReference type="STRING" id="10090.ENSMUSP00000075924"/>
<dbReference type="GlyGen" id="Q8BZ05">
    <property type="glycosylation" value="2 sites, 2 N-linked glycans (2 sites)"/>
</dbReference>
<dbReference type="iPTMnet" id="Q8BZ05"/>
<dbReference type="PhosphoSitePlus" id="Q8BZ05"/>
<dbReference type="PaxDb" id="10090-ENSMUSP00000075924"/>
<dbReference type="ProteomicsDB" id="283195">
    <molecule id="Q8BZ05-1"/>
</dbReference>
<dbReference type="ProteomicsDB" id="283196">
    <molecule id="Q8BZ05-2"/>
</dbReference>
<dbReference type="UCSC" id="uc008xlz.2">
    <molecule id="Q8BZ05-2"/>
    <property type="organism name" value="mouse"/>
</dbReference>
<dbReference type="AGR" id="MGI:2684416"/>
<dbReference type="MGI" id="MGI:2684416">
    <property type="gene designation" value="Arap2"/>
</dbReference>
<dbReference type="eggNOG" id="KOG1117">
    <property type="taxonomic scope" value="Eukaryota"/>
</dbReference>
<dbReference type="InParanoid" id="Q8BZ05"/>
<dbReference type="PhylomeDB" id="Q8BZ05"/>
<dbReference type="Reactome" id="R-MMU-8980692">
    <property type="pathway name" value="RHOA GTPase cycle"/>
</dbReference>
<dbReference type="Reactome" id="R-MMU-9013148">
    <property type="pathway name" value="CDC42 GTPase cycle"/>
</dbReference>
<dbReference type="Reactome" id="R-MMU-9013149">
    <property type="pathway name" value="RAC1 GTPase cycle"/>
</dbReference>
<dbReference type="Reactome" id="R-MMU-9013423">
    <property type="pathway name" value="RAC3 GTPase cycle"/>
</dbReference>
<dbReference type="ChiTaRS" id="Arap2">
    <property type="organism name" value="mouse"/>
</dbReference>
<dbReference type="PRO" id="PR:Q8BZ05"/>
<dbReference type="Proteomes" id="UP000000589">
    <property type="component" value="Unplaced"/>
</dbReference>
<dbReference type="RNAct" id="Q8BZ05">
    <property type="molecule type" value="protein"/>
</dbReference>
<dbReference type="GO" id="GO:0005737">
    <property type="term" value="C:cytoplasm"/>
    <property type="evidence" value="ECO:0007669"/>
    <property type="project" value="UniProtKB-SubCell"/>
</dbReference>
<dbReference type="GO" id="GO:0005096">
    <property type="term" value="F:GTPase activator activity"/>
    <property type="evidence" value="ECO:0007669"/>
    <property type="project" value="UniProtKB-KW"/>
</dbReference>
<dbReference type="GO" id="GO:0005547">
    <property type="term" value="F:phosphatidylinositol-3,4,5-trisphosphate binding"/>
    <property type="evidence" value="ECO:0007669"/>
    <property type="project" value="InterPro"/>
</dbReference>
<dbReference type="GO" id="GO:0008270">
    <property type="term" value="F:zinc ion binding"/>
    <property type="evidence" value="ECO:0007669"/>
    <property type="project" value="UniProtKB-KW"/>
</dbReference>
<dbReference type="GO" id="GO:0007165">
    <property type="term" value="P:signal transduction"/>
    <property type="evidence" value="ECO:0007669"/>
    <property type="project" value="InterPro"/>
</dbReference>
<dbReference type="CDD" id="cd08856">
    <property type="entry name" value="ArfGap_ARAP2"/>
    <property type="match status" value="1"/>
</dbReference>
<dbReference type="CDD" id="cd13253">
    <property type="entry name" value="PH1_ARAP"/>
    <property type="match status" value="1"/>
</dbReference>
<dbReference type="CDD" id="cd13254">
    <property type="entry name" value="PH2_ARAP"/>
    <property type="match status" value="1"/>
</dbReference>
<dbReference type="CDD" id="cd13256">
    <property type="entry name" value="PH3_ARAP"/>
    <property type="match status" value="1"/>
</dbReference>
<dbReference type="CDD" id="cd17227">
    <property type="entry name" value="RA_ARAP2"/>
    <property type="match status" value="1"/>
</dbReference>
<dbReference type="CDD" id="cd04385">
    <property type="entry name" value="RhoGAP_ARAP"/>
    <property type="match status" value="1"/>
</dbReference>
<dbReference type="CDD" id="cd09490">
    <property type="entry name" value="SAM_Arap1_2_3"/>
    <property type="match status" value="1"/>
</dbReference>
<dbReference type="FunFam" id="2.30.29.30:FF:000316">
    <property type="entry name" value="Arf-GAP with Rho-GAP domain, ANK repeat and PH domain-containing protein 2"/>
    <property type="match status" value="1"/>
</dbReference>
<dbReference type="FunFam" id="2.30.29.30:FF:000128">
    <property type="entry name" value="arf-GAP with Rho-GAP domain, ANK repeat and PH domain-containing protein 2"/>
    <property type="match status" value="1"/>
</dbReference>
<dbReference type="FunFam" id="1.10.555.10:FF:000019">
    <property type="entry name" value="Arf-GAP with Rho-GAP domain, ANK repeat and PH domain-containing protein 3"/>
    <property type="match status" value="1"/>
</dbReference>
<dbReference type="FunFam" id="1.10.220.150:FF:000006">
    <property type="entry name" value="arf-GAP with Rho-GAP domain, ANK repeat and PH domain-containing protein 3"/>
    <property type="match status" value="1"/>
</dbReference>
<dbReference type="Gene3D" id="1.10.220.150">
    <property type="entry name" value="Arf GTPase activating protein"/>
    <property type="match status" value="1"/>
</dbReference>
<dbReference type="Gene3D" id="2.30.29.30">
    <property type="entry name" value="Pleckstrin-homology domain (PH domain)/Phosphotyrosine-binding domain (PTB)"/>
    <property type="match status" value="5"/>
</dbReference>
<dbReference type="Gene3D" id="1.10.555.10">
    <property type="entry name" value="Rho GTPase activation protein"/>
    <property type="match status" value="1"/>
</dbReference>
<dbReference type="Gene3D" id="1.10.150.50">
    <property type="entry name" value="Transcription Factor, Ets-1"/>
    <property type="match status" value="1"/>
</dbReference>
<dbReference type="InterPro" id="IPR052227">
    <property type="entry name" value="Arf-Rho-GAP_ANK-PH_domain"/>
</dbReference>
<dbReference type="InterPro" id="IPR037278">
    <property type="entry name" value="ARFGAP/RecO"/>
</dbReference>
<dbReference type="InterPro" id="IPR001164">
    <property type="entry name" value="ArfGAP_dom"/>
</dbReference>
<dbReference type="InterPro" id="IPR038508">
    <property type="entry name" value="ArfGAP_dom_sf"/>
</dbReference>
<dbReference type="InterPro" id="IPR011993">
    <property type="entry name" value="PH-like_dom_sf"/>
</dbReference>
<dbReference type="InterPro" id="IPR001849">
    <property type="entry name" value="PH_domain"/>
</dbReference>
<dbReference type="InterPro" id="IPR000159">
    <property type="entry name" value="RA_dom"/>
</dbReference>
<dbReference type="InterPro" id="IPR008936">
    <property type="entry name" value="Rho_GTPase_activation_prot"/>
</dbReference>
<dbReference type="InterPro" id="IPR037858">
    <property type="entry name" value="RhoGAP_ARAP"/>
</dbReference>
<dbReference type="InterPro" id="IPR000198">
    <property type="entry name" value="RhoGAP_dom"/>
</dbReference>
<dbReference type="InterPro" id="IPR001660">
    <property type="entry name" value="SAM"/>
</dbReference>
<dbReference type="InterPro" id="IPR013761">
    <property type="entry name" value="SAM/pointed_sf"/>
</dbReference>
<dbReference type="PANTHER" id="PTHR45899:SF1">
    <property type="entry name" value="ARF-GAP WITH RHO-GAP DOMAIN, ANK REPEAT AND PH DOMAIN-CONTAINING PROTEIN 2"/>
    <property type="match status" value="1"/>
</dbReference>
<dbReference type="PANTHER" id="PTHR45899">
    <property type="entry name" value="RHO GTPASE ACTIVATING PROTEIN AT 15B, ISOFORM C"/>
    <property type="match status" value="1"/>
</dbReference>
<dbReference type="Pfam" id="PF01412">
    <property type="entry name" value="ArfGap"/>
    <property type="match status" value="1"/>
</dbReference>
<dbReference type="Pfam" id="PF00169">
    <property type="entry name" value="PH"/>
    <property type="match status" value="4"/>
</dbReference>
<dbReference type="Pfam" id="PF00788">
    <property type="entry name" value="RA"/>
    <property type="match status" value="1"/>
</dbReference>
<dbReference type="Pfam" id="PF00620">
    <property type="entry name" value="RhoGAP"/>
    <property type="match status" value="1"/>
</dbReference>
<dbReference type="Pfam" id="PF00536">
    <property type="entry name" value="SAM_1"/>
    <property type="match status" value="1"/>
</dbReference>
<dbReference type="PRINTS" id="PR00405">
    <property type="entry name" value="REVINTRACTNG"/>
</dbReference>
<dbReference type="SMART" id="SM00105">
    <property type="entry name" value="ArfGap"/>
    <property type="match status" value="1"/>
</dbReference>
<dbReference type="SMART" id="SM00233">
    <property type="entry name" value="PH"/>
    <property type="match status" value="5"/>
</dbReference>
<dbReference type="SMART" id="SM00324">
    <property type="entry name" value="RhoGAP"/>
    <property type="match status" value="1"/>
</dbReference>
<dbReference type="SMART" id="SM00454">
    <property type="entry name" value="SAM"/>
    <property type="match status" value="1"/>
</dbReference>
<dbReference type="SUPFAM" id="SSF57863">
    <property type="entry name" value="ArfGap/RecO-like zinc finger"/>
    <property type="match status" value="1"/>
</dbReference>
<dbReference type="SUPFAM" id="SSF48350">
    <property type="entry name" value="GTPase activation domain, GAP"/>
    <property type="match status" value="1"/>
</dbReference>
<dbReference type="SUPFAM" id="SSF50729">
    <property type="entry name" value="PH domain-like"/>
    <property type="match status" value="5"/>
</dbReference>
<dbReference type="SUPFAM" id="SSF47769">
    <property type="entry name" value="SAM/Pointed domain"/>
    <property type="match status" value="1"/>
</dbReference>
<dbReference type="PROSITE" id="PS50115">
    <property type="entry name" value="ARFGAP"/>
    <property type="match status" value="1"/>
</dbReference>
<dbReference type="PROSITE" id="PS50003">
    <property type="entry name" value="PH_DOMAIN"/>
    <property type="match status" value="4"/>
</dbReference>
<dbReference type="PROSITE" id="PS50200">
    <property type="entry name" value="RA"/>
    <property type="match status" value="1"/>
</dbReference>
<dbReference type="PROSITE" id="PS50238">
    <property type="entry name" value="RHOGAP"/>
    <property type="match status" value="1"/>
</dbReference>
<dbReference type="PROSITE" id="PS50105">
    <property type="entry name" value="SAM_DOMAIN"/>
    <property type="match status" value="1"/>
</dbReference>
<sequence length="1703" mass="193398">MSSVSEVNADIRDFLMSINLEQYLLHFREFGFYTVRDCTSINDSVLHQIGISPTGHRRRILKQLQMIFSKMQDFPIYANVHKAKNGSTTKEQQHSDPSSSTHTGIECSDSITVHRPGPAPSEMVTTSTLSEGNCQSPKSHDKLCLSSHDLLCPEEELHQNVDSSKDSLFGGVNVKIDPLITKRAVEYTAGEEHTEKGNLTSEDSSKALSTNTECLPSGDCPTSGTHSGNGTNGVLESFPPTPFFQFQGEMVVNELYVPSSPVHGPMRSRSKLVSRPSRSFLLRHRPVPEIPGSTKSIPGSYFRDRRSNTTSAGKSLTLKNSNEDNSTSIFPYGETFLFQRLESSKKRSIKNEFWPHENTVKEEAATTRNSILTQSSIYDNRKEKVSEDKVEDIWIPREDKNNLAQDSASESEYSTVEECFQSLRRKNSKASKSRTQKAFYLDPFNRHSYPLSSTSGNTEPSSTISNAISPYACFYGSSAAKEKCGWLDKLSPQGKRMFQKRWVKFDGLSISHYNNDREMYSKGIIPLTAISTVRAQGDNKFEIVTTQRTFVFRVEKEEERNDWISILLSALKSPSLASQLQAAVAPEKCGYLELRGYKAKIFTVLRGNSVWLCKNEQDFKSGLGITIIPMNVANVKQVDRAVKQSFEIITPYRSFSFTADSEREKQEWIEAVQQSIAETLSDYEVAEKIWFNESNRSCADCKAPDPDWASINLCVVICKKCAGQHRSLGPKDCKVRSLKMDASIWSNELIELFIVIGNKRANDFWAGNLQKDEELQVDSPVEKRKNFITQKYKEGKFRKTLLASLTKEELNKALCAAVVKPDVLETMALLFSGADVMCATGDPVHSTPYLLAKKAGQSLQMEFLYHNKFSDFPQYDAHFEGGSSQDAAQSSFLCDFLYQTAAAASRVSSEKKLLEDTNKKWCVLEGGFLSYYENDRCTTPNGTINISEVICLAVHKEDFYLNTGPIFVFEIYLPSERVFLFGAETSQIQRKWTETIAKRFVPFVAENLTEADYDLIGQLFYKDCHALDQWRKGWFAMDKSSLCFCLQTQEAQEERMNLRRLQELTISTMVQNGEKVDVLLLVEKGRTLYIHGHTKLDFTVWHTAIEKAAGTDGNALQDQQLCKNDVPIIVNSCIAFVTQYGLGCKYIYQKDGDPLHISELLESFKKDARSVKLRAGKHQLEDVTGVLKSFLSDIDDALLTKELYPYWVSALDTQDEKERTSKYRAFIRSLPGVNRATLAALIEHLYRVQKCSEINHMNAHNLAMVFSSCLFQTKGQTSEEVNVIEDLINNYVEIFEVKEDQVKQMDIENSFITKWKDTQVSQAGDLLIEVFVERKEPDCSIIIRISPVMEAEELTNDILAIKNIIPMKGDIWATFEVIENEELERPLHYTENVLEQVLQWSSLAEPGSAYLVVKRFLTVDSIKQCREKSIKEGILKLKEEPSKILSGNKFQDRCVVLRDGHLFIYKDPKSSKHDKMFPLRAMKFYLGVKKKMKPPTSWGLTVYSEKHHWHLCCDSLQAQMEWMASIFIAQHENDIWPPAGKERKRSITKNPKIGGLPLIPIQHERNATQARKNIETARAELERLRLSEKHDPRDFTDSSLKDRASLIAHCLEHKDEKLRNRARKHRSFNCLEDTEAEGPHGLPKAYKGPKTLKKTEERNSKATLDADPKLPSKVIEELSVVLQRSRPLHKELPDEQTLQKEVK</sequence>
<keyword id="KW-0025">Alternative splicing</keyword>
<keyword id="KW-0963">Cytoplasm</keyword>
<keyword id="KW-0343">GTPase activation</keyword>
<keyword id="KW-0479">Metal-binding</keyword>
<keyword id="KW-0597">Phosphoprotein</keyword>
<keyword id="KW-1185">Reference proteome</keyword>
<keyword id="KW-0677">Repeat</keyword>
<keyword id="KW-0862">Zinc</keyword>
<keyword id="KW-0863">Zinc-finger</keyword>
<proteinExistence type="evidence at protein level"/>
<name>ARAP2_MOUSE</name>
<accession>Q8BZ05</accession>
<accession>Q80TX2</accession>
<accession>Q8C3T2</accession>
<accession>Q8VEL6</accession>
<reference key="1">
    <citation type="journal article" date="2005" name="Science">
        <title>The transcriptional landscape of the mammalian genome.</title>
        <authorList>
            <person name="Carninci P."/>
            <person name="Kasukawa T."/>
            <person name="Katayama S."/>
            <person name="Gough J."/>
            <person name="Frith M.C."/>
            <person name="Maeda N."/>
            <person name="Oyama R."/>
            <person name="Ravasi T."/>
            <person name="Lenhard B."/>
            <person name="Wells C."/>
            <person name="Kodzius R."/>
            <person name="Shimokawa K."/>
            <person name="Bajic V.B."/>
            <person name="Brenner S.E."/>
            <person name="Batalov S."/>
            <person name="Forrest A.R."/>
            <person name="Zavolan M."/>
            <person name="Davis M.J."/>
            <person name="Wilming L.G."/>
            <person name="Aidinis V."/>
            <person name="Allen J.E."/>
            <person name="Ambesi-Impiombato A."/>
            <person name="Apweiler R."/>
            <person name="Aturaliya R.N."/>
            <person name="Bailey T.L."/>
            <person name="Bansal M."/>
            <person name="Baxter L."/>
            <person name="Beisel K.W."/>
            <person name="Bersano T."/>
            <person name="Bono H."/>
            <person name="Chalk A.M."/>
            <person name="Chiu K.P."/>
            <person name="Choudhary V."/>
            <person name="Christoffels A."/>
            <person name="Clutterbuck D.R."/>
            <person name="Crowe M.L."/>
            <person name="Dalla E."/>
            <person name="Dalrymple B.P."/>
            <person name="de Bono B."/>
            <person name="Della Gatta G."/>
            <person name="di Bernardo D."/>
            <person name="Down T."/>
            <person name="Engstrom P."/>
            <person name="Fagiolini M."/>
            <person name="Faulkner G."/>
            <person name="Fletcher C.F."/>
            <person name="Fukushima T."/>
            <person name="Furuno M."/>
            <person name="Futaki S."/>
            <person name="Gariboldi M."/>
            <person name="Georgii-Hemming P."/>
            <person name="Gingeras T.R."/>
            <person name="Gojobori T."/>
            <person name="Green R.E."/>
            <person name="Gustincich S."/>
            <person name="Harbers M."/>
            <person name="Hayashi Y."/>
            <person name="Hensch T.K."/>
            <person name="Hirokawa N."/>
            <person name="Hill D."/>
            <person name="Huminiecki L."/>
            <person name="Iacono M."/>
            <person name="Ikeo K."/>
            <person name="Iwama A."/>
            <person name="Ishikawa T."/>
            <person name="Jakt M."/>
            <person name="Kanapin A."/>
            <person name="Katoh M."/>
            <person name="Kawasawa Y."/>
            <person name="Kelso J."/>
            <person name="Kitamura H."/>
            <person name="Kitano H."/>
            <person name="Kollias G."/>
            <person name="Krishnan S.P."/>
            <person name="Kruger A."/>
            <person name="Kummerfeld S.K."/>
            <person name="Kurochkin I.V."/>
            <person name="Lareau L.F."/>
            <person name="Lazarevic D."/>
            <person name="Lipovich L."/>
            <person name="Liu J."/>
            <person name="Liuni S."/>
            <person name="McWilliam S."/>
            <person name="Madan Babu M."/>
            <person name="Madera M."/>
            <person name="Marchionni L."/>
            <person name="Matsuda H."/>
            <person name="Matsuzawa S."/>
            <person name="Miki H."/>
            <person name="Mignone F."/>
            <person name="Miyake S."/>
            <person name="Morris K."/>
            <person name="Mottagui-Tabar S."/>
            <person name="Mulder N."/>
            <person name="Nakano N."/>
            <person name="Nakauchi H."/>
            <person name="Ng P."/>
            <person name="Nilsson R."/>
            <person name="Nishiguchi S."/>
            <person name="Nishikawa S."/>
            <person name="Nori F."/>
            <person name="Ohara O."/>
            <person name="Okazaki Y."/>
            <person name="Orlando V."/>
            <person name="Pang K.C."/>
            <person name="Pavan W.J."/>
            <person name="Pavesi G."/>
            <person name="Pesole G."/>
            <person name="Petrovsky N."/>
            <person name="Piazza S."/>
            <person name="Reed J."/>
            <person name="Reid J.F."/>
            <person name="Ring B.Z."/>
            <person name="Ringwald M."/>
            <person name="Rost B."/>
            <person name="Ruan Y."/>
            <person name="Salzberg S.L."/>
            <person name="Sandelin A."/>
            <person name="Schneider C."/>
            <person name="Schoenbach C."/>
            <person name="Sekiguchi K."/>
            <person name="Semple C.A."/>
            <person name="Seno S."/>
            <person name="Sessa L."/>
            <person name="Sheng Y."/>
            <person name="Shibata Y."/>
            <person name="Shimada H."/>
            <person name="Shimada K."/>
            <person name="Silva D."/>
            <person name="Sinclair B."/>
            <person name="Sperling S."/>
            <person name="Stupka E."/>
            <person name="Sugiura K."/>
            <person name="Sultana R."/>
            <person name="Takenaka Y."/>
            <person name="Taki K."/>
            <person name="Tammoja K."/>
            <person name="Tan S.L."/>
            <person name="Tang S."/>
            <person name="Taylor M.S."/>
            <person name="Tegner J."/>
            <person name="Teichmann S.A."/>
            <person name="Ueda H.R."/>
            <person name="van Nimwegen E."/>
            <person name="Verardo R."/>
            <person name="Wei C.L."/>
            <person name="Yagi K."/>
            <person name="Yamanishi H."/>
            <person name="Zabarovsky E."/>
            <person name="Zhu S."/>
            <person name="Zimmer A."/>
            <person name="Hide W."/>
            <person name="Bult C."/>
            <person name="Grimmond S.M."/>
            <person name="Teasdale R.D."/>
            <person name="Liu E.T."/>
            <person name="Brusic V."/>
            <person name="Quackenbush J."/>
            <person name="Wahlestedt C."/>
            <person name="Mattick J.S."/>
            <person name="Hume D.A."/>
            <person name="Kai C."/>
            <person name="Sasaki D."/>
            <person name="Tomaru Y."/>
            <person name="Fukuda S."/>
            <person name="Kanamori-Katayama M."/>
            <person name="Suzuki M."/>
            <person name="Aoki J."/>
            <person name="Arakawa T."/>
            <person name="Iida J."/>
            <person name="Imamura K."/>
            <person name="Itoh M."/>
            <person name="Kato T."/>
            <person name="Kawaji H."/>
            <person name="Kawagashira N."/>
            <person name="Kawashima T."/>
            <person name="Kojima M."/>
            <person name="Kondo S."/>
            <person name="Konno H."/>
            <person name="Nakano K."/>
            <person name="Ninomiya N."/>
            <person name="Nishio T."/>
            <person name="Okada M."/>
            <person name="Plessy C."/>
            <person name="Shibata K."/>
            <person name="Shiraki T."/>
            <person name="Suzuki S."/>
            <person name="Tagami M."/>
            <person name="Waki K."/>
            <person name="Watahiki A."/>
            <person name="Okamura-Oho Y."/>
            <person name="Suzuki H."/>
            <person name="Kawai J."/>
            <person name="Hayashizaki Y."/>
        </authorList>
    </citation>
    <scope>NUCLEOTIDE SEQUENCE [LARGE SCALE MRNA] (ISOFORM 2)</scope>
    <scope>NUCLEOTIDE SEQUENCE [LARGE SCALE MRNA] OF 1-1070 (ISOFORM 1)</scope>
    <source>
        <strain>C57BL/6J</strain>
        <tissue>Fetal lung</tissue>
        <tissue>Vagina</tissue>
    </source>
</reference>
<reference key="2">
    <citation type="journal article" date="2003" name="DNA Res.">
        <title>Prediction of the coding sequences of mouse homologues of KIAA gene: II. The complete nucleotide sequences of 400 mouse KIAA-homologous cDNAs identified by screening of terminal sequences of cDNA clones randomly sampled from size-fractionated libraries.</title>
        <authorList>
            <person name="Okazaki N."/>
            <person name="Kikuno R."/>
            <person name="Ohara R."/>
            <person name="Inamoto S."/>
            <person name="Aizawa H."/>
            <person name="Yuasa S."/>
            <person name="Nakajima D."/>
            <person name="Nagase T."/>
            <person name="Ohara O."/>
            <person name="Koga H."/>
        </authorList>
    </citation>
    <scope>NUCLEOTIDE SEQUENCE [LARGE SCALE MRNA] OF 759-1703 (ISOFORM 1)</scope>
    <source>
        <tissue>Brain</tissue>
    </source>
</reference>
<reference key="3">
    <citation type="journal article" date="2004" name="Genome Res.">
        <title>The status, quality, and expansion of the NIH full-length cDNA project: the Mammalian Gene Collection (MGC).</title>
        <authorList>
            <consortium name="The MGC Project Team"/>
        </authorList>
    </citation>
    <scope>NUCLEOTIDE SEQUENCE [LARGE SCALE MRNA] OF 1530-1703 (ISOFORM 1)</scope>
    <source>
        <strain>FVB/N</strain>
        <tissue>Mammary gland</tissue>
    </source>
</reference>
<reference key="4">
    <citation type="journal article" date="2006" name="Mol. Cell. Proteomics">
        <title>Comprehensive identification of phosphorylation sites in postsynaptic density preparations.</title>
        <authorList>
            <person name="Trinidad J.C."/>
            <person name="Specht C.G."/>
            <person name="Thalhammer A."/>
            <person name="Schoepfer R."/>
            <person name="Burlingame A.L."/>
        </authorList>
    </citation>
    <scope>IDENTIFICATION BY MASS SPECTROMETRY [LARGE SCALE ANALYSIS]</scope>
    <source>
        <tissue>Brain</tissue>
    </source>
</reference>
<reference key="5">
    <citation type="journal article" date="2008" name="J. Proteome Res.">
        <title>Large-scale identification and evolution indexing of tyrosine phosphorylation sites from murine brain.</title>
        <authorList>
            <person name="Ballif B.A."/>
            <person name="Carey G.R."/>
            <person name="Sunyaev S.R."/>
            <person name="Gygi S.P."/>
        </authorList>
    </citation>
    <scope>PHOSPHORYLATION [LARGE SCALE ANALYSIS] AT TYR-77</scope>
    <scope>IDENTIFICATION BY MASS SPECTROMETRY [LARGE SCALE ANALYSIS]</scope>
    <source>
        <tissue>Brain</tissue>
    </source>
</reference>
<reference key="6">
    <citation type="journal article" date="2010" name="Cell">
        <title>A tissue-specific atlas of mouse protein phosphorylation and expression.</title>
        <authorList>
            <person name="Huttlin E.L."/>
            <person name="Jedrychowski M.P."/>
            <person name="Elias J.E."/>
            <person name="Goswami T."/>
            <person name="Rad R."/>
            <person name="Beausoleil S.A."/>
            <person name="Villen J."/>
            <person name="Haas W."/>
            <person name="Sowa M.E."/>
            <person name="Gygi S.P."/>
        </authorList>
    </citation>
    <scope>PHOSPHORYLATION [LARGE SCALE ANALYSIS] AT SER-1627</scope>
    <scope>IDENTIFICATION BY MASS SPECTROMETRY [LARGE SCALE ANALYSIS]</scope>
    <source>
        <tissue>Brain</tissue>
    </source>
</reference>
<organism>
    <name type="scientific">Mus musculus</name>
    <name type="common">Mouse</name>
    <dbReference type="NCBI Taxonomy" id="10090"/>
    <lineage>
        <taxon>Eukaryota</taxon>
        <taxon>Metazoa</taxon>
        <taxon>Chordata</taxon>
        <taxon>Craniata</taxon>
        <taxon>Vertebrata</taxon>
        <taxon>Euteleostomi</taxon>
        <taxon>Mammalia</taxon>
        <taxon>Eutheria</taxon>
        <taxon>Euarchontoglires</taxon>
        <taxon>Glires</taxon>
        <taxon>Rodentia</taxon>
        <taxon>Myomorpha</taxon>
        <taxon>Muroidea</taxon>
        <taxon>Muridae</taxon>
        <taxon>Murinae</taxon>
        <taxon>Mus</taxon>
        <taxon>Mus</taxon>
    </lineage>
</organism>
<gene>
    <name type="primary">Arap2</name>
    <name type="synonym">Centd1</name>
    <name type="synonym">Gm148</name>
    <name type="synonym">Kiaa0580</name>
</gene>
<evidence type="ECO:0000250" key="1"/>
<evidence type="ECO:0000255" key="2">
    <source>
        <dbReference type="PROSITE-ProRule" id="PRU00145"/>
    </source>
</evidence>
<evidence type="ECO:0000255" key="3">
    <source>
        <dbReference type="PROSITE-ProRule" id="PRU00166"/>
    </source>
</evidence>
<evidence type="ECO:0000255" key="4">
    <source>
        <dbReference type="PROSITE-ProRule" id="PRU00172"/>
    </source>
</evidence>
<evidence type="ECO:0000255" key="5">
    <source>
        <dbReference type="PROSITE-ProRule" id="PRU00184"/>
    </source>
</evidence>
<evidence type="ECO:0000255" key="6">
    <source>
        <dbReference type="PROSITE-ProRule" id="PRU00288"/>
    </source>
</evidence>
<evidence type="ECO:0000256" key="7">
    <source>
        <dbReference type="SAM" id="MobiDB-lite"/>
    </source>
</evidence>
<evidence type="ECO:0000303" key="8">
    <source>
    </source>
</evidence>
<evidence type="ECO:0007744" key="9">
    <source>
    </source>
</evidence>
<evidence type="ECO:0007744" key="10">
    <source>
    </source>
</evidence>
<protein>
    <recommendedName>
        <fullName>Arf-GAP with Rho-GAP domain, ANK repeat and PH domain-containing protein 2</fullName>
    </recommendedName>
    <alternativeName>
        <fullName>Centaurin-delta-1</fullName>
        <shortName>Cnt-d1</shortName>
    </alternativeName>
</protein>
<comment type="function">
    <text evidence="1">Phosphatidylinositol 3,4,5-trisphosphate-dependent GTPase-activating protein that modulates actin cytoskeleton remodeling by regulating ARF and RHO family members. Is activated by phosphatidylinositol 3,4,5-trisphosphate (PtdIns(3,4,5)P3) binding. Can be activated by phosphatidylinositol 3,4-bisphosphate (PtdIns(3,4,5)P2) binding, albeit with lower efficiency (By similarity).</text>
</comment>
<comment type="subcellular location">
    <subcellularLocation>
        <location evidence="1">Cytoplasm</location>
    </subcellularLocation>
</comment>
<comment type="alternative products">
    <event type="alternative splicing"/>
    <isoform>
        <id>Q8BZ05-1</id>
        <name>1</name>
        <sequence type="displayed"/>
    </isoform>
    <isoform>
        <id>Q8BZ05-2</id>
        <name>2</name>
        <sequence type="described" ref="VSP_014996 VSP_014997"/>
    </isoform>
</comment>
<feature type="chain" id="PRO_0000074213" description="Arf-GAP with Rho-GAP domain, ANK repeat and PH domain-containing protein 2">
    <location>
        <begin position="1"/>
        <end position="1703"/>
    </location>
</feature>
<feature type="domain" description="SAM" evidence="5">
    <location>
        <begin position="6"/>
        <end position="70"/>
    </location>
</feature>
<feature type="domain" description="PH 1" evidence="2">
    <location>
        <begin position="480"/>
        <end position="572"/>
    </location>
</feature>
<feature type="domain" description="PH 2" evidence="2">
    <location>
        <begin position="585"/>
        <end position="677"/>
    </location>
</feature>
<feature type="domain" description="Arf-GAP" evidence="6">
    <location>
        <begin position="674"/>
        <end position="809"/>
    </location>
</feature>
<feature type="domain" description="PH 3" evidence="2">
    <location>
        <begin position="899"/>
        <end position="1001"/>
    </location>
</feature>
<feature type="domain" description="PH 4" evidence="2">
    <location>
        <begin position="1012"/>
        <end position="1110"/>
    </location>
</feature>
<feature type="domain" description="Rho-GAP" evidence="4">
    <location>
        <begin position="1114"/>
        <end position="1295"/>
    </location>
</feature>
<feature type="domain" description="Ras-associating" evidence="3">
    <location>
        <begin position="1324"/>
        <end position="1418"/>
    </location>
</feature>
<feature type="domain" description="PH 5" evidence="2">
    <location>
        <begin position="1428"/>
        <end position="1531"/>
    </location>
</feature>
<feature type="zinc finger region" description="C4-type" evidence="6">
    <location>
        <begin position="698"/>
        <end position="721"/>
    </location>
</feature>
<feature type="region of interest" description="Disordered" evidence="7">
    <location>
        <begin position="84"/>
        <end position="132"/>
    </location>
</feature>
<feature type="region of interest" description="Disordered" evidence="7">
    <location>
        <begin position="191"/>
        <end position="232"/>
    </location>
</feature>
<feature type="region of interest" description="Disordered" evidence="7">
    <location>
        <begin position="286"/>
        <end position="319"/>
    </location>
</feature>
<feature type="region of interest" description="Disordered" evidence="7">
    <location>
        <begin position="1633"/>
        <end position="1670"/>
    </location>
</feature>
<feature type="region of interest" description="Disordered" evidence="7">
    <location>
        <begin position="1684"/>
        <end position="1703"/>
    </location>
</feature>
<feature type="compositionally biased region" description="Polar residues" evidence="7">
    <location>
        <begin position="85"/>
        <end position="103"/>
    </location>
</feature>
<feature type="compositionally biased region" description="Polar residues" evidence="7">
    <location>
        <begin position="123"/>
        <end position="132"/>
    </location>
</feature>
<feature type="compositionally biased region" description="Polar residues" evidence="7">
    <location>
        <begin position="197"/>
        <end position="214"/>
    </location>
</feature>
<feature type="compositionally biased region" description="Low complexity" evidence="7">
    <location>
        <begin position="222"/>
        <end position="232"/>
    </location>
</feature>
<feature type="compositionally biased region" description="Polar residues" evidence="7">
    <location>
        <begin position="308"/>
        <end position="319"/>
    </location>
</feature>
<feature type="compositionally biased region" description="Basic and acidic residues" evidence="7">
    <location>
        <begin position="1653"/>
        <end position="1670"/>
    </location>
</feature>
<feature type="compositionally biased region" description="Basic and acidic residues" evidence="7">
    <location>
        <begin position="1688"/>
        <end position="1703"/>
    </location>
</feature>
<feature type="site" description="Arginine finger; crucial for GTP hydrolysis by stabilizing the transition state" evidence="4">
    <location>
        <position position="1149"/>
    </location>
</feature>
<feature type="modified residue" description="Phosphotyrosine" evidence="9">
    <location>
        <position position="77"/>
    </location>
</feature>
<feature type="modified residue" description="Phosphoserine" evidence="10">
    <location>
        <position position="1627"/>
    </location>
</feature>
<feature type="splice variant" id="VSP_014996" description="In isoform 2." evidence="8">
    <location>
        <begin position="1"/>
        <end position="1519"/>
    </location>
</feature>
<feature type="splice variant" id="VSP_014997" description="In isoform 2." evidence="8">
    <location>
        <begin position="1531"/>
        <end position="1575"/>
    </location>
</feature>